<sequence length="110" mass="12450">MSIQNLNTRDPFADAIKGNDDDIQDGLVHIRIQQRNGRKTLTTVQGLSAEYDLKKIVRSCKKEFACNGTVIEHPEYGEVLQLQGDQRENICQWLTKVGLAKPDQLKVHGF</sequence>
<organism>
    <name type="scientific">Drosophila melanogaster</name>
    <name type="common">Fruit fly</name>
    <dbReference type="NCBI Taxonomy" id="7227"/>
    <lineage>
        <taxon>Eukaryota</taxon>
        <taxon>Metazoa</taxon>
        <taxon>Ecdysozoa</taxon>
        <taxon>Arthropoda</taxon>
        <taxon>Hexapoda</taxon>
        <taxon>Insecta</taxon>
        <taxon>Pterygota</taxon>
        <taxon>Neoptera</taxon>
        <taxon>Endopterygota</taxon>
        <taxon>Diptera</taxon>
        <taxon>Brachycera</taxon>
        <taxon>Muscomorpha</taxon>
        <taxon>Ephydroidea</taxon>
        <taxon>Drosophilidae</taxon>
        <taxon>Drosophila</taxon>
        <taxon>Sophophora</taxon>
    </lineage>
</organism>
<dbReference type="EMBL" id="AE014296">
    <property type="protein sequence ID" value="AAF47744.1"/>
    <property type="molecule type" value="Genomic_DNA"/>
</dbReference>
<dbReference type="EMBL" id="AY095068">
    <property type="protein sequence ID" value="AAM11396.1"/>
    <property type="molecule type" value="mRNA"/>
</dbReference>
<dbReference type="RefSeq" id="NP_647792.1">
    <property type="nucleotide sequence ID" value="NM_139535.4"/>
</dbReference>
<dbReference type="SMR" id="Q9VZS3"/>
<dbReference type="BioGRID" id="63894">
    <property type="interactions" value="9"/>
</dbReference>
<dbReference type="DIP" id="DIP-22738N"/>
<dbReference type="FunCoup" id="Q9VZS3">
    <property type="interactions" value="1086"/>
</dbReference>
<dbReference type="IntAct" id="Q9VZS3">
    <property type="interactions" value="23"/>
</dbReference>
<dbReference type="STRING" id="7227.FBpp0072908"/>
<dbReference type="iPTMnet" id="Q9VZS3"/>
<dbReference type="PaxDb" id="7227-FBpp0072908"/>
<dbReference type="DNASU" id="38398"/>
<dbReference type="EnsemblMetazoa" id="FBtr0073044">
    <property type="protein sequence ID" value="FBpp0072908"/>
    <property type="gene ID" value="FBgn0035423"/>
</dbReference>
<dbReference type="GeneID" id="38398"/>
<dbReference type="KEGG" id="dme:Dmel_CG17737"/>
<dbReference type="UCSC" id="CG17737-RA">
    <property type="organism name" value="d. melanogaster"/>
</dbReference>
<dbReference type="AGR" id="FB:FBgn0035423"/>
<dbReference type="CTD" id="10209"/>
<dbReference type="FlyBase" id="FBgn0035423">
    <property type="gene designation" value="eIF1"/>
</dbReference>
<dbReference type="VEuPathDB" id="VectorBase:FBgn0035423"/>
<dbReference type="eggNOG" id="KOG1770">
    <property type="taxonomic scope" value="Eukaryota"/>
</dbReference>
<dbReference type="GeneTree" id="ENSGT00390000015789"/>
<dbReference type="HOGENOM" id="CLU_082805_3_0_1"/>
<dbReference type="InParanoid" id="Q9VZS3"/>
<dbReference type="OMA" id="VENHIHI"/>
<dbReference type="OrthoDB" id="10248435at2759"/>
<dbReference type="PhylomeDB" id="Q9VZS3"/>
<dbReference type="BioGRID-ORCS" id="38398">
    <property type="hits" value="1 hit in 3 CRISPR screens"/>
</dbReference>
<dbReference type="ChiTaRS" id="CG17737">
    <property type="organism name" value="fly"/>
</dbReference>
<dbReference type="GenomeRNAi" id="38398"/>
<dbReference type="PRO" id="PR:Q9VZS3"/>
<dbReference type="Proteomes" id="UP000000803">
    <property type="component" value="Chromosome 3L"/>
</dbReference>
<dbReference type="Bgee" id="FBgn0035423">
    <property type="expression patterns" value="Expressed in eye disc (Drosophila) and 260 other cell types or tissues"/>
</dbReference>
<dbReference type="ExpressionAtlas" id="Q9VZS3">
    <property type="expression patterns" value="baseline and differential"/>
</dbReference>
<dbReference type="GO" id="GO:0016282">
    <property type="term" value="C:eukaryotic 43S preinitiation complex"/>
    <property type="evidence" value="ECO:0000250"/>
    <property type="project" value="FlyBase"/>
</dbReference>
<dbReference type="GO" id="GO:0043614">
    <property type="term" value="C:multi-eIF complex"/>
    <property type="evidence" value="ECO:0000250"/>
    <property type="project" value="FlyBase"/>
</dbReference>
<dbReference type="GO" id="GO:0043024">
    <property type="term" value="F:ribosomal small subunit binding"/>
    <property type="evidence" value="ECO:0000318"/>
    <property type="project" value="GO_Central"/>
</dbReference>
<dbReference type="GO" id="GO:0003723">
    <property type="term" value="F:RNA binding"/>
    <property type="evidence" value="ECO:0000318"/>
    <property type="project" value="GO_Central"/>
</dbReference>
<dbReference type="GO" id="GO:0003743">
    <property type="term" value="F:translation initiation factor activity"/>
    <property type="evidence" value="ECO:0000250"/>
    <property type="project" value="FlyBase"/>
</dbReference>
<dbReference type="GO" id="GO:0071456">
    <property type="term" value="P:cellular response to hypoxia"/>
    <property type="evidence" value="ECO:0000315"/>
    <property type="project" value="FlyBase"/>
</dbReference>
<dbReference type="GO" id="GO:0001731">
    <property type="term" value="P:formation of translation preinitiation complex"/>
    <property type="evidence" value="ECO:0000250"/>
    <property type="project" value="FlyBase"/>
</dbReference>
<dbReference type="GO" id="GO:0006417">
    <property type="term" value="P:regulation of translation"/>
    <property type="evidence" value="ECO:0007669"/>
    <property type="project" value="UniProtKB-KW"/>
</dbReference>
<dbReference type="CDD" id="cd11566">
    <property type="entry name" value="eIF1_SUI1"/>
    <property type="match status" value="1"/>
</dbReference>
<dbReference type="FunFam" id="3.30.780.10:FF:000010">
    <property type="entry name" value="Protein translation factor SUI1"/>
    <property type="match status" value="1"/>
</dbReference>
<dbReference type="Gene3D" id="3.30.780.10">
    <property type="entry name" value="SUI1-like domain"/>
    <property type="match status" value="1"/>
</dbReference>
<dbReference type="InterPro" id="IPR001950">
    <property type="entry name" value="SUI1"/>
</dbReference>
<dbReference type="InterPro" id="IPR036877">
    <property type="entry name" value="SUI1_dom_sf"/>
</dbReference>
<dbReference type="InterPro" id="IPR005874">
    <property type="entry name" value="SUI1_euk"/>
</dbReference>
<dbReference type="NCBIfam" id="TIGR01160">
    <property type="entry name" value="SUI1_MOF2"/>
    <property type="match status" value="1"/>
</dbReference>
<dbReference type="PANTHER" id="PTHR10388">
    <property type="entry name" value="EUKARYOTIC TRANSLATION INITIATION FACTOR SUI1"/>
    <property type="match status" value="1"/>
</dbReference>
<dbReference type="Pfam" id="PF01253">
    <property type="entry name" value="SUI1"/>
    <property type="match status" value="1"/>
</dbReference>
<dbReference type="PIRSF" id="PIRSF004499">
    <property type="entry name" value="SUI1_euk"/>
    <property type="match status" value="1"/>
</dbReference>
<dbReference type="SUPFAM" id="SSF55159">
    <property type="entry name" value="eIF1-like"/>
    <property type="match status" value="1"/>
</dbReference>
<dbReference type="PROSITE" id="PS50296">
    <property type="entry name" value="SUI1"/>
    <property type="match status" value="1"/>
</dbReference>
<evidence type="ECO:0000269" key="1">
    <source>
    </source>
</evidence>
<evidence type="ECO:0000305" key="2"/>
<evidence type="ECO:0000312" key="3">
    <source>
        <dbReference type="FlyBase" id="FBgn0035423"/>
    </source>
</evidence>
<reference key="1">
    <citation type="journal article" date="2000" name="Science">
        <title>The genome sequence of Drosophila melanogaster.</title>
        <authorList>
            <person name="Adams M.D."/>
            <person name="Celniker S.E."/>
            <person name="Holt R.A."/>
            <person name="Evans C.A."/>
            <person name="Gocayne J.D."/>
            <person name="Amanatides P.G."/>
            <person name="Scherer S.E."/>
            <person name="Li P.W."/>
            <person name="Hoskins R.A."/>
            <person name="Galle R.F."/>
            <person name="George R.A."/>
            <person name="Lewis S.E."/>
            <person name="Richards S."/>
            <person name="Ashburner M."/>
            <person name="Henderson S.N."/>
            <person name="Sutton G.G."/>
            <person name="Wortman J.R."/>
            <person name="Yandell M.D."/>
            <person name="Zhang Q."/>
            <person name="Chen L.X."/>
            <person name="Brandon R.C."/>
            <person name="Rogers Y.-H.C."/>
            <person name="Blazej R.G."/>
            <person name="Champe M."/>
            <person name="Pfeiffer B.D."/>
            <person name="Wan K.H."/>
            <person name="Doyle C."/>
            <person name="Baxter E.G."/>
            <person name="Helt G."/>
            <person name="Nelson C.R."/>
            <person name="Miklos G.L.G."/>
            <person name="Abril J.F."/>
            <person name="Agbayani A."/>
            <person name="An H.-J."/>
            <person name="Andrews-Pfannkoch C."/>
            <person name="Baldwin D."/>
            <person name="Ballew R.M."/>
            <person name="Basu A."/>
            <person name="Baxendale J."/>
            <person name="Bayraktaroglu L."/>
            <person name="Beasley E.M."/>
            <person name="Beeson K.Y."/>
            <person name="Benos P.V."/>
            <person name="Berman B.P."/>
            <person name="Bhandari D."/>
            <person name="Bolshakov S."/>
            <person name="Borkova D."/>
            <person name="Botchan M.R."/>
            <person name="Bouck J."/>
            <person name="Brokstein P."/>
            <person name="Brottier P."/>
            <person name="Burtis K.C."/>
            <person name="Busam D.A."/>
            <person name="Butler H."/>
            <person name="Cadieu E."/>
            <person name="Center A."/>
            <person name="Chandra I."/>
            <person name="Cherry J.M."/>
            <person name="Cawley S."/>
            <person name="Dahlke C."/>
            <person name="Davenport L.B."/>
            <person name="Davies P."/>
            <person name="de Pablos B."/>
            <person name="Delcher A."/>
            <person name="Deng Z."/>
            <person name="Mays A.D."/>
            <person name="Dew I."/>
            <person name="Dietz S.M."/>
            <person name="Dodson K."/>
            <person name="Doup L.E."/>
            <person name="Downes M."/>
            <person name="Dugan-Rocha S."/>
            <person name="Dunkov B.C."/>
            <person name="Dunn P."/>
            <person name="Durbin K.J."/>
            <person name="Evangelista C.C."/>
            <person name="Ferraz C."/>
            <person name="Ferriera S."/>
            <person name="Fleischmann W."/>
            <person name="Fosler C."/>
            <person name="Gabrielian A.E."/>
            <person name="Garg N.S."/>
            <person name="Gelbart W.M."/>
            <person name="Glasser K."/>
            <person name="Glodek A."/>
            <person name="Gong F."/>
            <person name="Gorrell J.H."/>
            <person name="Gu Z."/>
            <person name="Guan P."/>
            <person name="Harris M."/>
            <person name="Harris N.L."/>
            <person name="Harvey D.A."/>
            <person name="Heiman T.J."/>
            <person name="Hernandez J.R."/>
            <person name="Houck J."/>
            <person name="Hostin D."/>
            <person name="Houston K.A."/>
            <person name="Howland T.J."/>
            <person name="Wei M.-H."/>
            <person name="Ibegwam C."/>
            <person name="Jalali M."/>
            <person name="Kalush F."/>
            <person name="Karpen G.H."/>
            <person name="Ke Z."/>
            <person name="Kennison J.A."/>
            <person name="Ketchum K.A."/>
            <person name="Kimmel B.E."/>
            <person name="Kodira C.D."/>
            <person name="Kraft C.L."/>
            <person name="Kravitz S."/>
            <person name="Kulp D."/>
            <person name="Lai Z."/>
            <person name="Lasko P."/>
            <person name="Lei Y."/>
            <person name="Levitsky A.A."/>
            <person name="Li J.H."/>
            <person name="Li Z."/>
            <person name="Liang Y."/>
            <person name="Lin X."/>
            <person name="Liu X."/>
            <person name="Mattei B."/>
            <person name="McIntosh T.C."/>
            <person name="McLeod M.P."/>
            <person name="McPherson D."/>
            <person name="Merkulov G."/>
            <person name="Milshina N.V."/>
            <person name="Mobarry C."/>
            <person name="Morris J."/>
            <person name="Moshrefi A."/>
            <person name="Mount S.M."/>
            <person name="Moy M."/>
            <person name="Murphy B."/>
            <person name="Murphy L."/>
            <person name="Muzny D.M."/>
            <person name="Nelson D.L."/>
            <person name="Nelson D.R."/>
            <person name="Nelson K.A."/>
            <person name="Nixon K."/>
            <person name="Nusskern D.R."/>
            <person name="Pacleb J.M."/>
            <person name="Palazzolo M."/>
            <person name="Pittman G.S."/>
            <person name="Pan S."/>
            <person name="Pollard J."/>
            <person name="Puri V."/>
            <person name="Reese M.G."/>
            <person name="Reinert K."/>
            <person name="Remington K."/>
            <person name="Saunders R.D.C."/>
            <person name="Scheeler F."/>
            <person name="Shen H."/>
            <person name="Shue B.C."/>
            <person name="Siden-Kiamos I."/>
            <person name="Simpson M."/>
            <person name="Skupski M.P."/>
            <person name="Smith T.J."/>
            <person name="Spier E."/>
            <person name="Spradling A.C."/>
            <person name="Stapleton M."/>
            <person name="Strong R."/>
            <person name="Sun E."/>
            <person name="Svirskas R."/>
            <person name="Tector C."/>
            <person name="Turner R."/>
            <person name="Venter E."/>
            <person name="Wang A.H."/>
            <person name="Wang X."/>
            <person name="Wang Z.-Y."/>
            <person name="Wassarman D.A."/>
            <person name="Weinstock G.M."/>
            <person name="Weissenbach J."/>
            <person name="Williams S.M."/>
            <person name="Woodage T."/>
            <person name="Worley K.C."/>
            <person name="Wu D."/>
            <person name="Yang S."/>
            <person name="Yao Q.A."/>
            <person name="Ye J."/>
            <person name="Yeh R.-F."/>
            <person name="Zaveri J.S."/>
            <person name="Zhan M."/>
            <person name="Zhang G."/>
            <person name="Zhao Q."/>
            <person name="Zheng L."/>
            <person name="Zheng X.H."/>
            <person name="Zhong F.N."/>
            <person name="Zhong W."/>
            <person name="Zhou X."/>
            <person name="Zhu S.C."/>
            <person name="Zhu X."/>
            <person name="Smith H.O."/>
            <person name="Gibbs R.A."/>
            <person name="Myers E.W."/>
            <person name="Rubin G.M."/>
            <person name="Venter J.C."/>
        </authorList>
    </citation>
    <scope>NUCLEOTIDE SEQUENCE [LARGE SCALE GENOMIC DNA]</scope>
    <source>
        <strain>Berkeley</strain>
    </source>
</reference>
<reference key="2">
    <citation type="journal article" date="2002" name="Genome Biol.">
        <title>Annotation of the Drosophila melanogaster euchromatic genome: a systematic review.</title>
        <authorList>
            <person name="Misra S."/>
            <person name="Crosby M.A."/>
            <person name="Mungall C.J."/>
            <person name="Matthews B.B."/>
            <person name="Campbell K.S."/>
            <person name="Hradecky P."/>
            <person name="Huang Y."/>
            <person name="Kaminker J.S."/>
            <person name="Millburn G.H."/>
            <person name="Prochnik S.E."/>
            <person name="Smith C.D."/>
            <person name="Tupy J.L."/>
            <person name="Whitfield E.J."/>
            <person name="Bayraktaroglu L."/>
            <person name="Berman B.P."/>
            <person name="Bettencourt B.R."/>
            <person name="Celniker S.E."/>
            <person name="de Grey A.D.N.J."/>
            <person name="Drysdale R.A."/>
            <person name="Harris N.L."/>
            <person name="Richter J."/>
            <person name="Russo S."/>
            <person name="Schroeder A.J."/>
            <person name="Shu S.Q."/>
            <person name="Stapleton M."/>
            <person name="Yamada C."/>
            <person name="Ashburner M."/>
            <person name="Gelbart W.M."/>
            <person name="Rubin G.M."/>
            <person name="Lewis S.E."/>
        </authorList>
    </citation>
    <scope>GENOME REANNOTATION</scope>
    <source>
        <strain>Berkeley</strain>
    </source>
</reference>
<reference key="3">
    <citation type="journal article" date="2002" name="Genome Biol.">
        <title>A Drosophila full-length cDNA resource.</title>
        <authorList>
            <person name="Stapleton M."/>
            <person name="Carlson J.W."/>
            <person name="Brokstein P."/>
            <person name="Yu C."/>
            <person name="Champe M."/>
            <person name="George R.A."/>
            <person name="Guarin H."/>
            <person name="Kronmiller B."/>
            <person name="Pacleb J.M."/>
            <person name="Park S."/>
            <person name="Wan K.H."/>
            <person name="Rubin G.M."/>
            <person name="Celniker S.E."/>
        </authorList>
    </citation>
    <scope>NUCLEOTIDE SEQUENCE [LARGE SCALE MRNA]</scope>
    <source>
        <strain>Berkeley</strain>
        <tissue>Embryo</tissue>
    </source>
</reference>
<reference key="4">
    <citation type="journal article" date="2007" name="Mol. Biosyst.">
        <title>An integrated chemical, mass spectrometric and computational strategy for (quantitative) phosphoproteomics: application to Drosophila melanogaster Kc167 cells.</title>
        <authorList>
            <person name="Bodenmiller B."/>
            <person name="Mueller L.N."/>
            <person name="Pedrioli P.G.A."/>
            <person name="Pflieger D."/>
            <person name="Juenger M.A."/>
            <person name="Eng J.K."/>
            <person name="Aebersold R."/>
            <person name="Tao W.A."/>
        </authorList>
    </citation>
    <scope>PHOSPHORYLATION [LARGE SCALE ANALYSIS] AT THR-40</scope>
    <scope>IDENTIFICATION BY MASS SPECTROMETRY</scope>
</reference>
<gene>
    <name evidence="3" type="primary">eIF1</name>
    <name evidence="3" type="ORF">CG17737</name>
</gene>
<name>ETIF1_DROME</name>
<protein>
    <recommendedName>
        <fullName evidence="2">Eukaryotic translation initiation factor eIF1</fullName>
    </recommendedName>
    <alternativeName>
        <fullName>Protein translation factor SUI1 homolog</fullName>
    </alternativeName>
</protein>
<keyword id="KW-0597">Phosphoprotein</keyword>
<keyword id="KW-0648">Protein biosynthesis</keyword>
<keyword id="KW-1185">Reference proteome</keyword>
<keyword id="KW-0810">Translation regulation</keyword>
<comment type="function">
    <text>Probably involved in translation.</text>
</comment>
<comment type="similarity">
    <text evidence="2">Belongs to the SUI1 family.</text>
</comment>
<proteinExistence type="evidence at protein level"/>
<accession>Q9VZS3</accession>
<feature type="chain" id="PRO_0000130563" description="Eukaryotic translation initiation factor eIF1">
    <location>
        <begin position="1"/>
        <end position="110"/>
    </location>
</feature>
<feature type="modified residue" description="Phosphothreonine" evidence="1">
    <location>
        <position position="40"/>
    </location>
</feature>